<accession>B0G102</accession>
<sequence>MPSAPHYSSKYYDDKYEYRHVILPSEISSLIPRDVLLTEDECRKLGIRQSDGWEHYANHKPEPHILLFRRPHSGIPNDVDYL</sequence>
<name>CKS1_DICDI</name>
<organism>
    <name type="scientific">Dictyostelium discoideum</name>
    <name type="common">Social amoeba</name>
    <dbReference type="NCBI Taxonomy" id="44689"/>
    <lineage>
        <taxon>Eukaryota</taxon>
        <taxon>Amoebozoa</taxon>
        <taxon>Evosea</taxon>
        <taxon>Eumycetozoa</taxon>
        <taxon>Dictyostelia</taxon>
        <taxon>Dictyosteliales</taxon>
        <taxon>Dictyosteliaceae</taxon>
        <taxon>Dictyostelium</taxon>
    </lineage>
</organism>
<keyword id="KW-0131">Cell cycle</keyword>
<keyword id="KW-0132">Cell division</keyword>
<keyword id="KW-1185">Reference proteome</keyword>
<reference key="1">
    <citation type="journal article" date="2002" name="Nature">
        <title>Sequence and analysis of chromosome 2 of Dictyostelium discoideum.</title>
        <authorList>
            <person name="Gloeckner G."/>
            <person name="Eichinger L."/>
            <person name="Szafranski K."/>
            <person name="Pachebat J.A."/>
            <person name="Bankier A.T."/>
            <person name="Dear P.H."/>
            <person name="Lehmann R."/>
            <person name="Baumgart C."/>
            <person name="Parra G."/>
            <person name="Abril J.F."/>
            <person name="Guigo R."/>
            <person name="Kumpf K."/>
            <person name="Tunggal B."/>
            <person name="Cox E.C."/>
            <person name="Quail M.A."/>
            <person name="Platzer M."/>
            <person name="Rosenthal A."/>
            <person name="Noegel A.A."/>
        </authorList>
    </citation>
    <scope>NUCLEOTIDE SEQUENCE [LARGE SCALE GENOMIC DNA]</scope>
    <source>
        <strain>AX4</strain>
    </source>
</reference>
<reference key="2">
    <citation type="journal article" date="2005" name="Nature">
        <title>The genome of the social amoeba Dictyostelium discoideum.</title>
        <authorList>
            <person name="Eichinger L."/>
            <person name="Pachebat J.A."/>
            <person name="Gloeckner G."/>
            <person name="Rajandream M.A."/>
            <person name="Sucgang R."/>
            <person name="Berriman M."/>
            <person name="Song J."/>
            <person name="Olsen R."/>
            <person name="Szafranski K."/>
            <person name="Xu Q."/>
            <person name="Tunggal B."/>
            <person name="Kummerfeld S."/>
            <person name="Madera M."/>
            <person name="Konfortov B.A."/>
            <person name="Rivero F."/>
            <person name="Bankier A.T."/>
            <person name="Lehmann R."/>
            <person name="Hamlin N."/>
            <person name="Davies R."/>
            <person name="Gaudet P."/>
            <person name="Fey P."/>
            <person name="Pilcher K."/>
            <person name="Chen G."/>
            <person name="Saunders D."/>
            <person name="Sodergren E.J."/>
            <person name="Davis P."/>
            <person name="Kerhornou A."/>
            <person name="Nie X."/>
            <person name="Hall N."/>
            <person name="Anjard C."/>
            <person name="Hemphill L."/>
            <person name="Bason N."/>
            <person name="Farbrother P."/>
            <person name="Desany B."/>
            <person name="Just E."/>
            <person name="Morio T."/>
            <person name="Rost R."/>
            <person name="Churcher C.M."/>
            <person name="Cooper J."/>
            <person name="Haydock S."/>
            <person name="van Driessche N."/>
            <person name="Cronin A."/>
            <person name="Goodhead I."/>
            <person name="Muzny D.M."/>
            <person name="Mourier T."/>
            <person name="Pain A."/>
            <person name="Lu M."/>
            <person name="Harper D."/>
            <person name="Lindsay R."/>
            <person name="Hauser H."/>
            <person name="James K.D."/>
            <person name="Quiles M."/>
            <person name="Madan Babu M."/>
            <person name="Saito T."/>
            <person name="Buchrieser C."/>
            <person name="Wardroper A."/>
            <person name="Felder M."/>
            <person name="Thangavelu M."/>
            <person name="Johnson D."/>
            <person name="Knights A."/>
            <person name="Loulseged H."/>
            <person name="Mungall K.L."/>
            <person name="Oliver K."/>
            <person name="Price C."/>
            <person name="Quail M.A."/>
            <person name="Urushihara H."/>
            <person name="Hernandez J."/>
            <person name="Rabbinowitsch E."/>
            <person name="Steffen D."/>
            <person name="Sanders M."/>
            <person name="Ma J."/>
            <person name="Kohara Y."/>
            <person name="Sharp S."/>
            <person name="Simmonds M.N."/>
            <person name="Spiegler S."/>
            <person name="Tivey A."/>
            <person name="Sugano S."/>
            <person name="White B."/>
            <person name="Walker D."/>
            <person name="Woodward J.R."/>
            <person name="Winckler T."/>
            <person name="Tanaka Y."/>
            <person name="Shaulsky G."/>
            <person name="Schleicher M."/>
            <person name="Weinstock G.M."/>
            <person name="Rosenthal A."/>
            <person name="Cox E.C."/>
            <person name="Chisholm R.L."/>
            <person name="Gibbs R.A."/>
            <person name="Loomis W.F."/>
            <person name="Platzer M."/>
            <person name="Kay R.R."/>
            <person name="Williams J.G."/>
            <person name="Dear P.H."/>
            <person name="Noegel A.A."/>
            <person name="Barrell B.G."/>
            <person name="Kuspa A."/>
        </authorList>
    </citation>
    <scope>NUCLEOTIDE SEQUENCE [LARGE SCALE GENOMIC DNA]</scope>
    <source>
        <strain>AX4</strain>
    </source>
</reference>
<feature type="chain" id="PRO_0000327668" description="Cyclin-dependent kinases regulatory subunit">
    <location>
        <begin position="1"/>
        <end position="82"/>
    </location>
</feature>
<protein>
    <recommendedName>
        <fullName>Cyclin-dependent kinases regulatory subunit</fullName>
    </recommendedName>
</protein>
<comment type="function">
    <text evidence="1">Binds to the catalytic subunit of the cyclin dependent kinases and is essential for their biological function.</text>
</comment>
<comment type="subunit">
    <text evidence="1">Forms a homohexamer that can probably bind six kinase subunits.</text>
</comment>
<comment type="similarity">
    <text evidence="2">Belongs to the CKS family.</text>
</comment>
<comment type="sequence caution" evidence="2">
    <conflict type="miscellaneous discrepancy">
        <sequence resource="EMBL-CDS" id="EDR41107"/>
    </conflict>
    <text>Unusual initiator. The initiator methionine is coded by a non-canonical TTG leucine codon.</text>
</comment>
<proteinExistence type="inferred from homology"/>
<dbReference type="EMBL" id="AAFI02000006">
    <property type="protein sequence ID" value="EDR41107.2"/>
    <property type="status" value="ALT_SEQ"/>
    <property type="molecule type" value="Genomic_DNA"/>
</dbReference>
<dbReference type="RefSeq" id="XP_001732965.2">
    <property type="nucleotide sequence ID" value="XM_001732913.1"/>
</dbReference>
<dbReference type="SMR" id="B0G102"/>
<dbReference type="FunCoup" id="B0G102">
    <property type="interactions" value="41"/>
</dbReference>
<dbReference type="STRING" id="44689.B0G102"/>
<dbReference type="PaxDb" id="44689-DDB0235212"/>
<dbReference type="EnsemblProtists" id="EDR41107">
    <property type="protein sequence ID" value="EDR41107"/>
    <property type="gene ID" value="DDB_G0271642"/>
</dbReference>
<dbReference type="GeneID" id="8618042"/>
<dbReference type="KEGG" id="ddi:DDB_G0271642"/>
<dbReference type="dictyBase" id="DDB_G0271642">
    <property type="gene designation" value="cks1"/>
</dbReference>
<dbReference type="VEuPathDB" id="AmoebaDB:DDB_G0271642"/>
<dbReference type="eggNOG" id="KOG3484">
    <property type="taxonomic scope" value="Eukaryota"/>
</dbReference>
<dbReference type="InParanoid" id="B0G102"/>
<dbReference type="PhylomeDB" id="B0G102"/>
<dbReference type="Reactome" id="R-DDI-69231">
    <property type="pathway name" value="Cyclin D associated events in G1"/>
</dbReference>
<dbReference type="PRO" id="PR:B0G102"/>
<dbReference type="Proteomes" id="UP000002195">
    <property type="component" value="Chromosome 2"/>
</dbReference>
<dbReference type="GO" id="GO:0000307">
    <property type="term" value="C:cyclin-dependent protein kinase holoenzyme complex"/>
    <property type="evidence" value="ECO:0000318"/>
    <property type="project" value="GO_Central"/>
</dbReference>
<dbReference type="GO" id="GO:0019005">
    <property type="term" value="C:SCF ubiquitin ligase complex"/>
    <property type="evidence" value="ECO:0000318"/>
    <property type="project" value="GO_Central"/>
</dbReference>
<dbReference type="GO" id="GO:0061575">
    <property type="term" value="F:cyclin-dependent protein serine/threonine kinase activator activity"/>
    <property type="evidence" value="ECO:0000318"/>
    <property type="project" value="GO_Central"/>
</dbReference>
<dbReference type="GO" id="GO:0042393">
    <property type="term" value="F:histone binding"/>
    <property type="evidence" value="ECO:0000318"/>
    <property type="project" value="GO_Central"/>
</dbReference>
<dbReference type="GO" id="GO:0019901">
    <property type="term" value="F:protein kinase binding"/>
    <property type="evidence" value="ECO:0000318"/>
    <property type="project" value="GO_Central"/>
</dbReference>
<dbReference type="GO" id="GO:0043130">
    <property type="term" value="F:ubiquitin binding"/>
    <property type="evidence" value="ECO:0000318"/>
    <property type="project" value="GO_Central"/>
</dbReference>
<dbReference type="GO" id="GO:0051301">
    <property type="term" value="P:cell division"/>
    <property type="evidence" value="ECO:0007669"/>
    <property type="project" value="UniProtKB-KW"/>
</dbReference>
<dbReference type="GO" id="GO:0007346">
    <property type="term" value="P:regulation of mitotic cell cycle"/>
    <property type="evidence" value="ECO:0000318"/>
    <property type="project" value="GO_Central"/>
</dbReference>
<dbReference type="FunFam" id="3.30.170.10:FF:000007">
    <property type="entry name" value="Cyclin-dependent kinases regulatory subunit"/>
    <property type="match status" value="1"/>
</dbReference>
<dbReference type="Gene3D" id="3.30.170.10">
    <property type="entry name" value="Cyclin-dependent kinase, regulatory subunit"/>
    <property type="match status" value="1"/>
</dbReference>
<dbReference type="InterPro" id="IPR000789">
    <property type="entry name" value="Cyclin-dep_kinase_reg-sub"/>
</dbReference>
<dbReference type="InterPro" id="IPR036858">
    <property type="entry name" value="Cyclin-dep_kinase_reg-sub_sf"/>
</dbReference>
<dbReference type="PANTHER" id="PTHR23415">
    <property type="entry name" value="CYCLIN-DEPENDENT KINASES REGULATORY SUBUNIT/60S RIBOSOME SUBUNIT BIOGENESIS PROTEIN NIP7"/>
    <property type="match status" value="1"/>
</dbReference>
<dbReference type="Pfam" id="PF01111">
    <property type="entry name" value="CKS"/>
    <property type="match status" value="1"/>
</dbReference>
<dbReference type="PRINTS" id="PR00296">
    <property type="entry name" value="CYCLINKINASE"/>
</dbReference>
<dbReference type="SMART" id="SM01084">
    <property type="entry name" value="CKS"/>
    <property type="match status" value="1"/>
</dbReference>
<dbReference type="SUPFAM" id="SSF55637">
    <property type="entry name" value="Cell cycle regulatory proteins"/>
    <property type="match status" value="1"/>
</dbReference>
<dbReference type="PROSITE" id="PS00945">
    <property type="entry name" value="CKS_2"/>
    <property type="match status" value="1"/>
</dbReference>
<gene>
    <name type="primary">cks1</name>
    <name type="ORF">DDB_G0271642</name>
</gene>
<evidence type="ECO:0000250" key="1"/>
<evidence type="ECO:0000305" key="2"/>